<sequence length="178" mass="20040">MAEQTGAVDQCLLQASSFKSQGNKCYTEHRMRQAVSLYHKALLQLRSLDASLYSPLPGVGPTAVKLNSQQAEELKTLQADCYNNLAACLLQSQPPRYQRVYECSLQVLSLQPENVKALYRAGVSSYHLKDYTNAHHYLSQAASRAPKDGNIKRYVQLTDTALSTFREEEKQRYQGMFG</sequence>
<reference key="1">
    <citation type="submission" date="2007-03" db="EMBL/GenBank/DDBJ databases">
        <authorList>
            <consortium name="NIH - Xenopus Gene Collection (XGC) project"/>
        </authorList>
    </citation>
    <scope>NUCLEOTIDE SEQUENCE [LARGE SCALE MRNA]</scope>
    <source>
        <tissue>Embryo</tissue>
    </source>
</reference>
<evidence type="ECO:0000305" key="1"/>
<name>TTC9C_XENTR</name>
<accession>A4IHU6</accession>
<keyword id="KW-1185">Reference proteome</keyword>
<keyword id="KW-0677">Repeat</keyword>
<keyword id="KW-0802">TPR repeat</keyword>
<proteinExistence type="evidence at transcript level"/>
<gene>
    <name type="primary">ttc9c</name>
</gene>
<protein>
    <recommendedName>
        <fullName>Tetratricopeptide repeat protein 9C</fullName>
        <shortName>TPR repeat protein 9C</shortName>
    </recommendedName>
</protein>
<comment type="similarity">
    <text evidence="1">Belongs to the TTC9 family.</text>
</comment>
<feature type="chain" id="PRO_0000294469" description="Tetratricopeptide repeat protein 9C">
    <location>
        <begin position="1"/>
        <end position="178"/>
    </location>
</feature>
<feature type="repeat" description="TPR 1">
    <location>
        <begin position="15"/>
        <end position="48"/>
    </location>
</feature>
<feature type="repeat" description="TPR 2">
    <location>
        <begin position="79"/>
        <end position="114"/>
    </location>
</feature>
<feature type="repeat" description="TPR 3">
    <location>
        <begin position="115"/>
        <end position="148"/>
    </location>
</feature>
<dbReference type="EMBL" id="BC135693">
    <property type="protein sequence ID" value="AAI35694.1"/>
    <property type="molecule type" value="mRNA"/>
</dbReference>
<dbReference type="RefSeq" id="NP_001096317.1">
    <property type="nucleotide sequence ID" value="NM_001102847.1"/>
</dbReference>
<dbReference type="SMR" id="A4IHU6"/>
<dbReference type="FunCoup" id="A4IHU6">
    <property type="interactions" value="2368"/>
</dbReference>
<dbReference type="STRING" id="8364.ENSXETP00000036826"/>
<dbReference type="PaxDb" id="8364-ENSXETP00000013230"/>
<dbReference type="DNASU" id="100124897"/>
<dbReference type="GeneID" id="100124897"/>
<dbReference type="KEGG" id="xtr:100124897"/>
<dbReference type="AGR" id="Xenbase:XB-GENE-1006743"/>
<dbReference type="CTD" id="283237"/>
<dbReference type="Xenbase" id="XB-GENE-1006743">
    <property type="gene designation" value="ttc9c"/>
</dbReference>
<dbReference type="eggNOG" id="ENOG502RXZG">
    <property type="taxonomic scope" value="Eukaryota"/>
</dbReference>
<dbReference type="HOGENOM" id="CLU_100621_1_0_1"/>
<dbReference type="InParanoid" id="A4IHU6"/>
<dbReference type="OrthoDB" id="433738at2759"/>
<dbReference type="TreeFam" id="TF331917"/>
<dbReference type="Proteomes" id="UP000008143">
    <property type="component" value="Chromosome 4"/>
</dbReference>
<dbReference type="Bgee" id="ENSXETG00000006013">
    <property type="expression patterns" value="Expressed in neurula embryo and 13 other cell types or tissues"/>
</dbReference>
<dbReference type="ExpressionAtlas" id="A4IHU6">
    <property type="expression patterns" value="baseline"/>
</dbReference>
<dbReference type="Gene3D" id="1.25.40.10">
    <property type="entry name" value="Tetratricopeptide repeat domain"/>
    <property type="match status" value="1"/>
</dbReference>
<dbReference type="InterPro" id="IPR039663">
    <property type="entry name" value="AIP/AIPL1/TTC9"/>
</dbReference>
<dbReference type="InterPro" id="IPR011990">
    <property type="entry name" value="TPR-like_helical_dom_sf"/>
</dbReference>
<dbReference type="InterPro" id="IPR019734">
    <property type="entry name" value="TPR_rpt"/>
</dbReference>
<dbReference type="PANTHER" id="PTHR11242">
    <property type="entry name" value="ARYL HYDROCARBON RECEPTOR INTERACTING PROTEIN RELATED"/>
    <property type="match status" value="1"/>
</dbReference>
<dbReference type="PANTHER" id="PTHR11242:SF14">
    <property type="entry name" value="TETRATRICOPEPTIDE REPEAT PROTEIN 9C"/>
    <property type="match status" value="1"/>
</dbReference>
<dbReference type="SMART" id="SM00028">
    <property type="entry name" value="TPR"/>
    <property type="match status" value="3"/>
</dbReference>
<dbReference type="SUPFAM" id="SSF48452">
    <property type="entry name" value="TPR-like"/>
    <property type="match status" value="1"/>
</dbReference>
<dbReference type="PROSITE" id="PS50293">
    <property type="entry name" value="TPR_REGION"/>
    <property type="match status" value="1"/>
</dbReference>
<organism>
    <name type="scientific">Xenopus tropicalis</name>
    <name type="common">Western clawed frog</name>
    <name type="synonym">Silurana tropicalis</name>
    <dbReference type="NCBI Taxonomy" id="8364"/>
    <lineage>
        <taxon>Eukaryota</taxon>
        <taxon>Metazoa</taxon>
        <taxon>Chordata</taxon>
        <taxon>Craniata</taxon>
        <taxon>Vertebrata</taxon>
        <taxon>Euteleostomi</taxon>
        <taxon>Amphibia</taxon>
        <taxon>Batrachia</taxon>
        <taxon>Anura</taxon>
        <taxon>Pipoidea</taxon>
        <taxon>Pipidae</taxon>
        <taxon>Xenopodinae</taxon>
        <taxon>Xenopus</taxon>
        <taxon>Silurana</taxon>
    </lineage>
</organism>